<gene>
    <name evidence="1" type="primary">tig</name>
    <name type="ordered locus">VV1103</name>
</gene>
<name>TIG_VIBVY</name>
<evidence type="ECO:0000255" key="1">
    <source>
        <dbReference type="HAMAP-Rule" id="MF_00303"/>
    </source>
</evidence>
<proteinExistence type="inferred from homology"/>
<sequence>MQVTVETLEGLERRLNITVPAANIEDAVTAELRNIAKNRRFDGFRKGKVPMKMVAKMYGKAVRQDILGEVMQRHFIEAIIKEKINPAGAPTFAPVENKEGSDLVFNATFEVYPEVELKGLENITVEKPAVEVKDADVEEMIETLRKQQATWTEVEEAAEAGKRVSIDFVGSIDGEEFEGGKAENFPLEMGAGRMIPGFEDGIEGKTKGMEFEIDVTFPEDYHAENLKGKAAKFAIKVNKVEARQLPELNDEFVAKFGVAEGGIDALKAEVRKNMERELKQAVKNRIKEQAIDGLVKENEIDVPAALIDQEINVLRQQAAQRFGGNVEAAMQLPRELFEEQAKRRVVVGLLLGEVIKAHELKVDEEKVKAIITEMATAYEDPTEVVTYYEQNEQMMNNMRNVALEEQAIDAIIAKAQVSEKEVSFNELMNQPA</sequence>
<reference key="1">
    <citation type="journal article" date="2003" name="Genome Res.">
        <title>Comparative genome analysis of Vibrio vulnificus, a marine pathogen.</title>
        <authorList>
            <person name="Chen C.-Y."/>
            <person name="Wu K.-M."/>
            <person name="Chang Y.-C."/>
            <person name="Chang C.-H."/>
            <person name="Tsai H.-C."/>
            <person name="Liao T.-L."/>
            <person name="Liu Y.-M."/>
            <person name="Chen H.-J."/>
            <person name="Shen A.B.-T."/>
            <person name="Li J.-C."/>
            <person name="Su T.-L."/>
            <person name="Shao C.-P."/>
            <person name="Lee C.-T."/>
            <person name="Hor L.-I."/>
            <person name="Tsai S.-F."/>
        </authorList>
    </citation>
    <scope>NUCLEOTIDE SEQUENCE [LARGE SCALE GENOMIC DNA]</scope>
    <source>
        <strain>YJ016</strain>
    </source>
</reference>
<accession>Q7MMG8</accession>
<protein>
    <recommendedName>
        <fullName evidence="1">Trigger factor</fullName>
        <shortName evidence="1">TF</shortName>
        <ecNumber evidence="1">5.2.1.8</ecNumber>
    </recommendedName>
    <alternativeName>
        <fullName evidence="1">PPIase</fullName>
    </alternativeName>
</protein>
<organism>
    <name type="scientific">Vibrio vulnificus (strain YJ016)</name>
    <dbReference type="NCBI Taxonomy" id="196600"/>
    <lineage>
        <taxon>Bacteria</taxon>
        <taxon>Pseudomonadati</taxon>
        <taxon>Pseudomonadota</taxon>
        <taxon>Gammaproteobacteria</taxon>
        <taxon>Vibrionales</taxon>
        <taxon>Vibrionaceae</taxon>
        <taxon>Vibrio</taxon>
    </lineage>
</organism>
<keyword id="KW-0131">Cell cycle</keyword>
<keyword id="KW-0132">Cell division</keyword>
<keyword id="KW-0143">Chaperone</keyword>
<keyword id="KW-0963">Cytoplasm</keyword>
<keyword id="KW-0413">Isomerase</keyword>
<keyword id="KW-0697">Rotamase</keyword>
<comment type="function">
    <text evidence="1">Involved in protein export. Acts as a chaperone by maintaining the newly synthesized protein in an open conformation. Functions as a peptidyl-prolyl cis-trans isomerase.</text>
</comment>
<comment type="catalytic activity">
    <reaction evidence="1">
        <text>[protein]-peptidylproline (omega=180) = [protein]-peptidylproline (omega=0)</text>
        <dbReference type="Rhea" id="RHEA:16237"/>
        <dbReference type="Rhea" id="RHEA-COMP:10747"/>
        <dbReference type="Rhea" id="RHEA-COMP:10748"/>
        <dbReference type="ChEBI" id="CHEBI:83833"/>
        <dbReference type="ChEBI" id="CHEBI:83834"/>
        <dbReference type="EC" id="5.2.1.8"/>
    </reaction>
</comment>
<comment type="subcellular location">
    <subcellularLocation>
        <location>Cytoplasm</location>
    </subcellularLocation>
    <text evidence="1">About half TF is bound to the ribosome near the polypeptide exit tunnel while the other half is free in the cytoplasm.</text>
</comment>
<comment type="domain">
    <text evidence="1">Consists of 3 domains; the N-terminus binds the ribosome, the middle domain has PPIase activity, while the C-terminus has intrinsic chaperone activity on its own.</text>
</comment>
<comment type="similarity">
    <text evidence="1">Belongs to the FKBP-type PPIase family. Tig subfamily.</text>
</comment>
<dbReference type="EC" id="5.2.1.8" evidence="1"/>
<dbReference type="EMBL" id="BA000037">
    <property type="protein sequence ID" value="BAC93867.1"/>
    <property type="molecule type" value="Genomic_DNA"/>
</dbReference>
<dbReference type="RefSeq" id="WP_011149844.1">
    <property type="nucleotide sequence ID" value="NC_005139.1"/>
</dbReference>
<dbReference type="SMR" id="Q7MMG8"/>
<dbReference type="STRING" id="672.VV93_v1c10240"/>
<dbReference type="GeneID" id="93894421"/>
<dbReference type="KEGG" id="vvy:VV1103"/>
<dbReference type="eggNOG" id="COG0544">
    <property type="taxonomic scope" value="Bacteria"/>
</dbReference>
<dbReference type="HOGENOM" id="CLU_033058_2_0_6"/>
<dbReference type="Proteomes" id="UP000002675">
    <property type="component" value="Chromosome I"/>
</dbReference>
<dbReference type="GO" id="GO:0005737">
    <property type="term" value="C:cytoplasm"/>
    <property type="evidence" value="ECO:0007669"/>
    <property type="project" value="UniProtKB-SubCell"/>
</dbReference>
<dbReference type="GO" id="GO:0003755">
    <property type="term" value="F:peptidyl-prolyl cis-trans isomerase activity"/>
    <property type="evidence" value="ECO:0007669"/>
    <property type="project" value="UniProtKB-UniRule"/>
</dbReference>
<dbReference type="GO" id="GO:0044183">
    <property type="term" value="F:protein folding chaperone"/>
    <property type="evidence" value="ECO:0007669"/>
    <property type="project" value="TreeGrafter"/>
</dbReference>
<dbReference type="GO" id="GO:0043022">
    <property type="term" value="F:ribosome binding"/>
    <property type="evidence" value="ECO:0007669"/>
    <property type="project" value="TreeGrafter"/>
</dbReference>
<dbReference type="GO" id="GO:0051083">
    <property type="term" value="P:'de novo' cotranslational protein folding"/>
    <property type="evidence" value="ECO:0007669"/>
    <property type="project" value="TreeGrafter"/>
</dbReference>
<dbReference type="GO" id="GO:0051301">
    <property type="term" value="P:cell division"/>
    <property type="evidence" value="ECO:0007669"/>
    <property type="project" value="UniProtKB-KW"/>
</dbReference>
<dbReference type="GO" id="GO:0061077">
    <property type="term" value="P:chaperone-mediated protein folding"/>
    <property type="evidence" value="ECO:0007669"/>
    <property type="project" value="TreeGrafter"/>
</dbReference>
<dbReference type="GO" id="GO:0015031">
    <property type="term" value="P:protein transport"/>
    <property type="evidence" value="ECO:0007669"/>
    <property type="project" value="UniProtKB-UniRule"/>
</dbReference>
<dbReference type="GO" id="GO:0043335">
    <property type="term" value="P:protein unfolding"/>
    <property type="evidence" value="ECO:0007669"/>
    <property type="project" value="TreeGrafter"/>
</dbReference>
<dbReference type="FunFam" id="3.10.50.40:FF:000001">
    <property type="entry name" value="Trigger factor"/>
    <property type="match status" value="1"/>
</dbReference>
<dbReference type="FunFam" id="3.30.70.1050:FF:000001">
    <property type="entry name" value="Trigger factor"/>
    <property type="match status" value="1"/>
</dbReference>
<dbReference type="Gene3D" id="3.10.50.40">
    <property type="match status" value="1"/>
</dbReference>
<dbReference type="Gene3D" id="3.30.70.1050">
    <property type="entry name" value="Trigger factor ribosome-binding domain"/>
    <property type="match status" value="1"/>
</dbReference>
<dbReference type="Gene3D" id="1.10.3120.10">
    <property type="entry name" value="Trigger factor, C-terminal domain"/>
    <property type="match status" value="1"/>
</dbReference>
<dbReference type="HAMAP" id="MF_00303">
    <property type="entry name" value="Trigger_factor_Tig"/>
    <property type="match status" value="1"/>
</dbReference>
<dbReference type="InterPro" id="IPR046357">
    <property type="entry name" value="PPIase_dom_sf"/>
</dbReference>
<dbReference type="InterPro" id="IPR001179">
    <property type="entry name" value="PPIase_FKBP_dom"/>
</dbReference>
<dbReference type="InterPro" id="IPR005215">
    <property type="entry name" value="Trig_fac"/>
</dbReference>
<dbReference type="InterPro" id="IPR008880">
    <property type="entry name" value="Trigger_fac_C"/>
</dbReference>
<dbReference type="InterPro" id="IPR037041">
    <property type="entry name" value="Trigger_fac_C_sf"/>
</dbReference>
<dbReference type="InterPro" id="IPR008881">
    <property type="entry name" value="Trigger_fac_ribosome-bd_bac"/>
</dbReference>
<dbReference type="InterPro" id="IPR036611">
    <property type="entry name" value="Trigger_fac_ribosome-bd_sf"/>
</dbReference>
<dbReference type="InterPro" id="IPR027304">
    <property type="entry name" value="Trigger_fact/SurA_dom_sf"/>
</dbReference>
<dbReference type="NCBIfam" id="TIGR00115">
    <property type="entry name" value="tig"/>
    <property type="match status" value="1"/>
</dbReference>
<dbReference type="PANTHER" id="PTHR30560">
    <property type="entry name" value="TRIGGER FACTOR CHAPERONE AND PEPTIDYL-PROLYL CIS/TRANS ISOMERASE"/>
    <property type="match status" value="1"/>
</dbReference>
<dbReference type="PANTHER" id="PTHR30560:SF3">
    <property type="entry name" value="TRIGGER FACTOR-LIKE PROTEIN TIG, CHLOROPLASTIC"/>
    <property type="match status" value="1"/>
</dbReference>
<dbReference type="Pfam" id="PF00254">
    <property type="entry name" value="FKBP_C"/>
    <property type="match status" value="1"/>
</dbReference>
<dbReference type="Pfam" id="PF05698">
    <property type="entry name" value="Trigger_C"/>
    <property type="match status" value="1"/>
</dbReference>
<dbReference type="Pfam" id="PF05697">
    <property type="entry name" value="Trigger_N"/>
    <property type="match status" value="1"/>
</dbReference>
<dbReference type="PIRSF" id="PIRSF003095">
    <property type="entry name" value="Trigger_factor"/>
    <property type="match status" value="1"/>
</dbReference>
<dbReference type="SUPFAM" id="SSF54534">
    <property type="entry name" value="FKBP-like"/>
    <property type="match status" value="1"/>
</dbReference>
<dbReference type="SUPFAM" id="SSF109998">
    <property type="entry name" value="Triger factor/SurA peptide-binding domain-like"/>
    <property type="match status" value="1"/>
</dbReference>
<dbReference type="SUPFAM" id="SSF102735">
    <property type="entry name" value="Trigger factor ribosome-binding domain"/>
    <property type="match status" value="1"/>
</dbReference>
<dbReference type="PROSITE" id="PS50059">
    <property type="entry name" value="FKBP_PPIASE"/>
    <property type="match status" value="1"/>
</dbReference>
<feature type="chain" id="PRO_0000179461" description="Trigger factor">
    <location>
        <begin position="1"/>
        <end position="432"/>
    </location>
</feature>
<feature type="domain" description="PPIase FKBP-type" evidence="1">
    <location>
        <begin position="161"/>
        <end position="246"/>
    </location>
</feature>